<organism>
    <name type="scientific">Drosophila melanogaster</name>
    <name type="common">Fruit fly</name>
    <dbReference type="NCBI Taxonomy" id="7227"/>
    <lineage>
        <taxon>Eukaryota</taxon>
        <taxon>Metazoa</taxon>
        <taxon>Ecdysozoa</taxon>
        <taxon>Arthropoda</taxon>
        <taxon>Hexapoda</taxon>
        <taxon>Insecta</taxon>
        <taxon>Pterygota</taxon>
        <taxon>Neoptera</taxon>
        <taxon>Endopterygota</taxon>
        <taxon>Diptera</taxon>
        <taxon>Brachycera</taxon>
        <taxon>Muscomorpha</taxon>
        <taxon>Ephydroidea</taxon>
        <taxon>Drosophilidae</taxon>
        <taxon>Drosophila</taxon>
        <taxon>Sophophora</taxon>
    </lineage>
</organism>
<evidence type="ECO:0000255" key="1"/>
<evidence type="ECO:0000255" key="2">
    <source>
        <dbReference type="PROSITE-ProRule" id="PRU00283"/>
    </source>
</evidence>
<evidence type="ECO:0000256" key="3">
    <source>
        <dbReference type="SAM" id="MobiDB-lite"/>
    </source>
</evidence>
<evidence type="ECO:0000269" key="4">
    <source>
    </source>
</evidence>
<evidence type="ECO:0000305" key="5"/>
<evidence type="ECO:0007829" key="6">
    <source>
        <dbReference type="PDB" id="3DC4"/>
    </source>
</evidence>
<evidence type="ECO:0007829" key="7">
    <source>
        <dbReference type="PDB" id="3DCB"/>
    </source>
</evidence>
<keyword id="KW-0002">3D-structure</keyword>
<keyword id="KW-0067">ATP-binding</keyword>
<keyword id="KW-0175">Coiled coil</keyword>
<keyword id="KW-0963">Cytoplasm</keyword>
<keyword id="KW-0206">Cytoskeleton</keyword>
<keyword id="KW-0493">Microtubule</keyword>
<keyword id="KW-0505">Motor protein</keyword>
<keyword id="KW-0547">Nucleotide-binding</keyword>
<keyword id="KW-1185">Reference proteome</keyword>
<feature type="chain" id="PRO_0000125426" description="Kinesin-like protein Nod">
    <location>
        <begin position="1"/>
        <end position="666"/>
    </location>
</feature>
<feature type="domain" description="Kinesin motor" evidence="2">
    <location>
        <begin position="8"/>
        <end position="320"/>
    </location>
</feature>
<feature type="region of interest" description="Disordered" evidence="3">
    <location>
        <begin position="423"/>
        <end position="450"/>
    </location>
</feature>
<feature type="coiled-coil region" evidence="1">
    <location>
        <begin position="639"/>
        <end position="666"/>
    </location>
</feature>
<feature type="binding site" evidence="2">
    <location>
        <begin position="87"/>
        <end position="94"/>
    </location>
    <ligand>
        <name>ATP</name>
        <dbReference type="ChEBI" id="CHEBI:30616"/>
    </ligand>
</feature>
<feature type="sequence variant" description="In allele NOD(DTW)." evidence="4">
    <original>S</original>
    <variation>N</variation>
    <location>
        <position position="94"/>
    </location>
</feature>
<feature type="strand" evidence="6">
    <location>
        <begin position="7"/>
        <end position="15"/>
    </location>
</feature>
<feature type="strand" evidence="6">
    <location>
        <begin position="29"/>
        <end position="31"/>
    </location>
</feature>
<feature type="strand" evidence="6">
    <location>
        <begin position="34"/>
        <end position="36"/>
    </location>
</feature>
<feature type="strand" evidence="6">
    <location>
        <begin position="38"/>
        <end position="43"/>
    </location>
</feature>
<feature type="strand" evidence="6">
    <location>
        <begin position="46"/>
        <end position="49"/>
    </location>
</feature>
<feature type="strand" evidence="6">
    <location>
        <begin position="51"/>
        <end position="54"/>
    </location>
</feature>
<feature type="helix" evidence="6">
    <location>
        <begin position="60"/>
        <end position="67"/>
    </location>
</feature>
<feature type="helix" evidence="6">
    <location>
        <begin position="69"/>
        <end position="77"/>
    </location>
</feature>
<feature type="strand" evidence="6">
    <location>
        <begin position="81"/>
        <end position="88"/>
    </location>
</feature>
<feature type="helix" evidence="6">
    <location>
        <begin position="93"/>
        <end position="97"/>
    </location>
</feature>
<feature type="helix" evidence="6">
    <location>
        <begin position="102"/>
        <end position="104"/>
    </location>
</feature>
<feature type="helix" evidence="6">
    <location>
        <begin position="107"/>
        <end position="109"/>
    </location>
</feature>
<feature type="helix" evidence="6">
    <location>
        <begin position="112"/>
        <end position="126"/>
    </location>
</feature>
<feature type="strand" evidence="6">
    <location>
        <begin position="127"/>
        <end position="130"/>
    </location>
</feature>
<feature type="strand" evidence="6">
    <location>
        <begin position="136"/>
        <end position="147"/>
    </location>
</feature>
<feature type="strand" evidence="6">
    <location>
        <begin position="149"/>
        <end position="151"/>
    </location>
</feature>
<feature type="turn" evidence="6">
    <location>
        <begin position="165"/>
        <end position="167"/>
    </location>
</feature>
<feature type="strand" evidence="7">
    <location>
        <begin position="172"/>
        <end position="176"/>
    </location>
</feature>
<feature type="helix" evidence="6">
    <location>
        <begin position="177"/>
        <end position="189"/>
    </location>
</feature>
<feature type="strand" evidence="6">
    <location>
        <begin position="205"/>
        <end position="214"/>
    </location>
</feature>
<feature type="strand" evidence="6">
    <location>
        <begin position="219"/>
        <end position="226"/>
    </location>
</feature>
<feature type="helix" evidence="6">
    <location>
        <begin position="252"/>
        <end position="264"/>
    </location>
</feature>
<feature type="helix" evidence="6">
    <location>
        <begin position="272"/>
        <end position="274"/>
    </location>
</feature>
<feature type="helix" evidence="6">
    <location>
        <begin position="276"/>
        <end position="280"/>
    </location>
</feature>
<feature type="turn" evidence="6">
    <location>
        <begin position="281"/>
        <end position="284"/>
    </location>
</feature>
<feature type="strand" evidence="6">
    <location>
        <begin position="290"/>
        <end position="297"/>
    </location>
</feature>
<feature type="helix" evidence="6">
    <location>
        <begin position="301"/>
        <end position="303"/>
    </location>
</feature>
<feature type="helix" evidence="6">
    <location>
        <begin position="304"/>
        <end position="318"/>
    </location>
</feature>
<accession>P18105</accession>
<accession>Q9VYW9</accession>
<sequence length="666" mass="73908">MEGAKLSAVRIAVREAPYRQFLGRREPSVVQFPPWSDGKSLIVDQNEFHFDHAFPATISQDEMYQALILPLVDKLLEGFQCTALAYGQTGTGKSYSMGMTPPGEILPEHLGILPRALGDIFERVTARQENNKDAIQVYASFIEIYNEKPFDLLGSTPHMPMVAARCQRCTCLPLHSQADLHHILELGTRNRRVRPTNMNSNSSRSHAIVTIHVKSKTHHSRMNIVDLAGSEGVRRTGHEGVARQEGVNINLGLLSINKVVMSMAAGHTVIPYRDSVLTTVLQASLTAQSYLTFLACISPHQCDLSETLSTLRFGTSAKKLRLNPMQVARQKQSLAARTTHVFRQALCTSTAIKSNAANHNSIVVPKSKYSTTKPLSAVLHRTRSELGMTPKAKKRARELLELEETTLELSSIHIQDSSLSLLGFHSDSDKDRHLMPPPTGQEPRQASSQNSTLMGIVEETEPKESSKVQQSMVAPTVPTTVRCQLFNTTISPISLRASSSQRELSGIQPMEETVVASPQQPCLRRSVRLASSMRSQNYGAIPKVMNLRRSTRLAGIREHATSVVVKNETDAIPHLRSTVQKKRTRNVKPAPKAWMANNTKCFLDLLNNGNVKQLQEIPGIGPKSAFSLALHRSRLGCFENLFQVKSLPIWSGNKWERFCQINCLDT</sequence>
<protein>
    <recommendedName>
        <fullName>Kinesin-like protein Nod</fullName>
    </recommendedName>
</protein>
<reference key="1">
    <citation type="journal article" date="1990" name="Cell">
        <title>A kinesin-like protein required for distributive chromosome segregation in Drosophila.</title>
        <authorList>
            <person name="Zhang P."/>
            <person name="Knowles B.A."/>
            <person name="Goldstein L.S.B."/>
            <person name="Hawley R.S."/>
        </authorList>
    </citation>
    <scope>NUCLEOTIDE SEQUENCE [GENOMIC DNA]</scope>
    <source>
        <strain>Oregon-R</strain>
    </source>
</reference>
<reference key="2">
    <citation type="journal article" date="2000" name="Science">
        <title>The genome sequence of Drosophila melanogaster.</title>
        <authorList>
            <person name="Adams M.D."/>
            <person name="Celniker S.E."/>
            <person name="Holt R.A."/>
            <person name="Evans C.A."/>
            <person name="Gocayne J.D."/>
            <person name="Amanatides P.G."/>
            <person name="Scherer S.E."/>
            <person name="Li P.W."/>
            <person name="Hoskins R.A."/>
            <person name="Galle R.F."/>
            <person name="George R.A."/>
            <person name="Lewis S.E."/>
            <person name="Richards S."/>
            <person name="Ashburner M."/>
            <person name="Henderson S.N."/>
            <person name="Sutton G.G."/>
            <person name="Wortman J.R."/>
            <person name="Yandell M.D."/>
            <person name="Zhang Q."/>
            <person name="Chen L.X."/>
            <person name="Brandon R.C."/>
            <person name="Rogers Y.-H.C."/>
            <person name="Blazej R.G."/>
            <person name="Champe M."/>
            <person name="Pfeiffer B.D."/>
            <person name="Wan K.H."/>
            <person name="Doyle C."/>
            <person name="Baxter E.G."/>
            <person name="Helt G."/>
            <person name="Nelson C.R."/>
            <person name="Miklos G.L.G."/>
            <person name="Abril J.F."/>
            <person name="Agbayani A."/>
            <person name="An H.-J."/>
            <person name="Andrews-Pfannkoch C."/>
            <person name="Baldwin D."/>
            <person name="Ballew R.M."/>
            <person name="Basu A."/>
            <person name="Baxendale J."/>
            <person name="Bayraktaroglu L."/>
            <person name="Beasley E.M."/>
            <person name="Beeson K.Y."/>
            <person name="Benos P.V."/>
            <person name="Berman B.P."/>
            <person name="Bhandari D."/>
            <person name="Bolshakov S."/>
            <person name="Borkova D."/>
            <person name="Botchan M.R."/>
            <person name="Bouck J."/>
            <person name="Brokstein P."/>
            <person name="Brottier P."/>
            <person name="Burtis K.C."/>
            <person name="Busam D.A."/>
            <person name="Butler H."/>
            <person name="Cadieu E."/>
            <person name="Center A."/>
            <person name="Chandra I."/>
            <person name="Cherry J.M."/>
            <person name="Cawley S."/>
            <person name="Dahlke C."/>
            <person name="Davenport L.B."/>
            <person name="Davies P."/>
            <person name="de Pablos B."/>
            <person name="Delcher A."/>
            <person name="Deng Z."/>
            <person name="Mays A.D."/>
            <person name="Dew I."/>
            <person name="Dietz S.M."/>
            <person name="Dodson K."/>
            <person name="Doup L.E."/>
            <person name="Downes M."/>
            <person name="Dugan-Rocha S."/>
            <person name="Dunkov B.C."/>
            <person name="Dunn P."/>
            <person name="Durbin K.J."/>
            <person name="Evangelista C.C."/>
            <person name="Ferraz C."/>
            <person name="Ferriera S."/>
            <person name="Fleischmann W."/>
            <person name="Fosler C."/>
            <person name="Gabrielian A.E."/>
            <person name="Garg N.S."/>
            <person name="Gelbart W.M."/>
            <person name="Glasser K."/>
            <person name="Glodek A."/>
            <person name="Gong F."/>
            <person name="Gorrell J.H."/>
            <person name="Gu Z."/>
            <person name="Guan P."/>
            <person name="Harris M."/>
            <person name="Harris N.L."/>
            <person name="Harvey D.A."/>
            <person name="Heiman T.J."/>
            <person name="Hernandez J.R."/>
            <person name="Houck J."/>
            <person name="Hostin D."/>
            <person name="Houston K.A."/>
            <person name="Howland T.J."/>
            <person name="Wei M.-H."/>
            <person name="Ibegwam C."/>
            <person name="Jalali M."/>
            <person name="Kalush F."/>
            <person name="Karpen G.H."/>
            <person name="Ke Z."/>
            <person name="Kennison J.A."/>
            <person name="Ketchum K.A."/>
            <person name="Kimmel B.E."/>
            <person name="Kodira C.D."/>
            <person name="Kraft C.L."/>
            <person name="Kravitz S."/>
            <person name="Kulp D."/>
            <person name="Lai Z."/>
            <person name="Lasko P."/>
            <person name="Lei Y."/>
            <person name="Levitsky A.A."/>
            <person name="Li J.H."/>
            <person name="Li Z."/>
            <person name="Liang Y."/>
            <person name="Lin X."/>
            <person name="Liu X."/>
            <person name="Mattei B."/>
            <person name="McIntosh T.C."/>
            <person name="McLeod M.P."/>
            <person name="McPherson D."/>
            <person name="Merkulov G."/>
            <person name="Milshina N.V."/>
            <person name="Mobarry C."/>
            <person name="Morris J."/>
            <person name="Moshrefi A."/>
            <person name="Mount S.M."/>
            <person name="Moy M."/>
            <person name="Murphy B."/>
            <person name="Murphy L."/>
            <person name="Muzny D.M."/>
            <person name="Nelson D.L."/>
            <person name="Nelson D.R."/>
            <person name="Nelson K.A."/>
            <person name="Nixon K."/>
            <person name="Nusskern D.R."/>
            <person name="Pacleb J.M."/>
            <person name="Palazzolo M."/>
            <person name="Pittman G.S."/>
            <person name="Pan S."/>
            <person name="Pollard J."/>
            <person name="Puri V."/>
            <person name="Reese M.G."/>
            <person name="Reinert K."/>
            <person name="Remington K."/>
            <person name="Saunders R.D.C."/>
            <person name="Scheeler F."/>
            <person name="Shen H."/>
            <person name="Shue B.C."/>
            <person name="Siden-Kiamos I."/>
            <person name="Simpson M."/>
            <person name="Skupski M.P."/>
            <person name="Smith T.J."/>
            <person name="Spier E."/>
            <person name="Spradling A.C."/>
            <person name="Stapleton M."/>
            <person name="Strong R."/>
            <person name="Sun E."/>
            <person name="Svirskas R."/>
            <person name="Tector C."/>
            <person name="Turner R."/>
            <person name="Venter E."/>
            <person name="Wang A.H."/>
            <person name="Wang X."/>
            <person name="Wang Z.-Y."/>
            <person name="Wassarman D.A."/>
            <person name="Weinstock G.M."/>
            <person name="Weissenbach J."/>
            <person name="Williams S.M."/>
            <person name="Woodage T."/>
            <person name="Worley K.C."/>
            <person name="Wu D."/>
            <person name="Yang S."/>
            <person name="Yao Q.A."/>
            <person name="Ye J."/>
            <person name="Yeh R.-F."/>
            <person name="Zaveri J.S."/>
            <person name="Zhan M."/>
            <person name="Zhang G."/>
            <person name="Zhao Q."/>
            <person name="Zheng L."/>
            <person name="Zheng X.H."/>
            <person name="Zhong F.N."/>
            <person name="Zhong W."/>
            <person name="Zhou X."/>
            <person name="Zhu S.C."/>
            <person name="Zhu X."/>
            <person name="Smith H.O."/>
            <person name="Gibbs R.A."/>
            <person name="Myers E.W."/>
            <person name="Rubin G.M."/>
            <person name="Venter J.C."/>
        </authorList>
    </citation>
    <scope>NUCLEOTIDE SEQUENCE [LARGE SCALE GENOMIC DNA]</scope>
    <source>
        <strain>Berkeley</strain>
    </source>
</reference>
<reference key="3">
    <citation type="journal article" date="2002" name="Genome Biol.">
        <title>Annotation of the Drosophila melanogaster euchromatic genome: a systematic review.</title>
        <authorList>
            <person name="Misra S."/>
            <person name="Crosby M.A."/>
            <person name="Mungall C.J."/>
            <person name="Matthews B.B."/>
            <person name="Campbell K.S."/>
            <person name="Hradecky P."/>
            <person name="Huang Y."/>
            <person name="Kaminker J.S."/>
            <person name="Millburn G.H."/>
            <person name="Prochnik S.E."/>
            <person name="Smith C.D."/>
            <person name="Tupy J.L."/>
            <person name="Whitfield E.J."/>
            <person name="Bayraktaroglu L."/>
            <person name="Berman B.P."/>
            <person name="Bettencourt B.R."/>
            <person name="Celniker S.E."/>
            <person name="de Grey A.D.N.J."/>
            <person name="Drysdale R.A."/>
            <person name="Harris N.L."/>
            <person name="Richter J."/>
            <person name="Russo S."/>
            <person name="Schroeder A.J."/>
            <person name="Shu S.Q."/>
            <person name="Stapleton M."/>
            <person name="Yamada C."/>
            <person name="Ashburner M."/>
            <person name="Gelbart W.M."/>
            <person name="Rubin G.M."/>
            <person name="Lewis S.E."/>
        </authorList>
    </citation>
    <scope>GENOME REANNOTATION</scope>
    <source>
        <strain>Berkeley</strain>
    </source>
</reference>
<reference key="4">
    <citation type="journal article" date="2002" name="Genome Biol.">
        <title>A Drosophila full-length cDNA resource.</title>
        <authorList>
            <person name="Stapleton M."/>
            <person name="Carlson J.W."/>
            <person name="Brokstein P."/>
            <person name="Yu C."/>
            <person name="Champe M."/>
            <person name="George R.A."/>
            <person name="Guarin H."/>
            <person name="Kronmiller B."/>
            <person name="Pacleb J.M."/>
            <person name="Park S."/>
            <person name="Wan K.H."/>
            <person name="Rubin G.M."/>
            <person name="Celniker S.E."/>
        </authorList>
    </citation>
    <scope>NUCLEOTIDE SEQUENCE [LARGE SCALE MRNA]</scope>
    <source>
        <strain>Berkeley</strain>
        <tissue>Embryo</tissue>
    </source>
</reference>
<reference key="5">
    <citation type="journal article" date="1991" name="Genetics">
        <title>The lethal(1)TW-6cs mutation of Drosophila melanogaster is a dominant antimorphic allele of nod and is associated with a single base change in the putative ATP-binding domain.</title>
        <authorList>
            <person name="Rasooly R.S."/>
            <person name="New C.M."/>
            <person name="Zhang P."/>
            <person name="Hawley R.S."/>
            <person name="Baker B.S."/>
        </authorList>
    </citation>
    <scope>VARIANT ASN-94</scope>
</reference>
<name>NOD_DROME</name>
<proteinExistence type="evidence at protein level"/>
<gene>
    <name type="primary">nod</name>
    <name type="synonym">NODA</name>
    <name type="ORF">CG1763</name>
</gene>
<dbReference type="EMBL" id="M36195">
    <property type="protein sequence ID" value="AAA28653.1"/>
    <property type="molecule type" value="Genomic_DNA"/>
</dbReference>
<dbReference type="EMBL" id="M94188">
    <property type="protein sequence ID" value="AAC14452.1"/>
    <property type="molecule type" value="Genomic_DNA"/>
</dbReference>
<dbReference type="EMBL" id="AE014298">
    <property type="protein sequence ID" value="AAF48064.2"/>
    <property type="molecule type" value="Genomic_DNA"/>
</dbReference>
<dbReference type="EMBL" id="AY050238">
    <property type="protein sequence ID" value="AAK84937.1"/>
    <property type="molecule type" value="mRNA"/>
</dbReference>
<dbReference type="PIR" id="A36026">
    <property type="entry name" value="A36026"/>
</dbReference>
<dbReference type="RefSeq" id="NP_001285129.1">
    <property type="nucleotide sequence ID" value="NM_001298200.1"/>
</dbReference>
<dbReference type="RefSeq" id="NP_511125.2">
    <property type="nucleotide sequence ID" value="NM_078570.3"/>
</dbReference>
<dbReference type="PDB" id="3DC4">
    <property type="method" value="X-ray"/>
    <property type="resolution" value="1.90 A"/>
    <property type="chains" value="A=1-318"/>
</dbReference>
<dbReference type="PDB" id="3DCB">
    <property type="method" value="X-ray"/>
    <property type="resolution" value="2.50 A"/>
    <property type="chains" value="A=1-318"/>
</dbReference>
<dbReference type="PDB" id="3DCO">
    <property type="method" value="EM"/>
    <property type="resolution" value="1.90 A"/>
    <property type="chains" value="N=1-318"/>
</dbReference>
<dbReference type="PDB" id="3PXN">
    <property type="method" value="X-ray"/>
    <property type="resolution" value="2.60 A"/>
    <property type="chains" value="A=1-322"/>
</dbReference>
<dbReference type="PDBsum" id="3DC4"/>
<dbReference type="PDBsum" id="3DCB"/>
<dbReference type="PDBsum" id="3DCO"/>
<dbReference type="PDBsum" id="3PXN"/>
<dbReference type="EMDB" id="EMD-5038"/>
<dbReference type="SMR" id="P18105"/>
<dbReference type="BioGRID" id="58516">
    <property type="interactions" value="7"/>
</dbReference>
<dbReference type="DIP" id="DIP-22708N"/>
<dbReference type="FunCoup" id="P18105">
    <property type="interactions" value="88"/>
</dbReference>
<dbReference type="IntAct" id="P18105">
    <property type="interactions" value="1"/>
</dbReference>
<dbReference type="STRING" id="7227.FBpp0073363"/>
<dbReference type="GlyGen" id="P18105">
    <property type="glycosylation" value="1 site"/>
</dbReference>
<dbReference type="PaxDb" id="7227-FBpp0073363"/>
<dbReference type="DNASU" id="32107"/>
<dbReference type="EnsemblMetazoa" id="FBtr0073516">
    <property type="protein sequence ID" value="FBpp0073363"/>
    <property type="gene ID" value="FBgn0002948"/>
</dbReference>
<dbReference type="EnsemblMetazoa" id="FBtr0340297">
    <property type="protein sequence ID" value="FBpp0309258"/>
    <property type="gene ID" value="FBgn0002948"/>
</dbReference>
<dbReference type="GeneID" id="32107"/>
<dbReference type="KEGG" id="dme:Dmel_CG1763"/>
<dbReference type="AGR" id="FB:FBgn0002948"/>
<dbReference type="CTD" id="32107"/>
<dbReference type="FlyBase" id="FBgn0002948">
    <property type="gene designation" value="nod"/>
</dbReference>
<dbReference type="VEuPathDB" id="VectorBase:FBgn0002948"/>
<dbReference type="eggNOG" id="KOG0244">
    <property type="taxonomic scope" value="Eukaryota"/>
</dbReference>
<dbReference type="HOGENOM" id="CLU_371847_0_0_1"/>
<dbReference type="InParanoid" id="P18105"/>
<dbReference type="OMA" id="HVRRTNM"/>
<dbReference type="OrthoDB" id="6237065at2759"/>
<dbReference type="PhylomeDB" id="P18105"/>
<dbReference type="Reactome" id="R-DME-5632684">
    <property type="pathway name" value="Hedgehog 'on' state"/>
</dbReference>
<dbReference type="Reactome" id="R-DME-6811434">
    <property type="pathway name" value="COPI-dependent Golgi-to-ER retrograde traffic"/>
</dbReference>
<dbReference type="Reactome" id="R-DME-983189">
    <property type="pathway name" value="Kinesins"/>
</dbReference>
<dbReference type="BioGRID-ORCS" id="32107">
    <property type="hits" value="0 hits in 1 CRISPR screen"/>
</dbReference>
<dbReference type="EvolutionaryTrace" id="P18105"/>
<dbReference type="GenomeRNAi" id="32107"/>
<dbReference type="PRO" id="PR:P18105"/>
<dbReference type="Proteomes" id="UP000000803">
    <property type="component" value="Chromosome X"/>
</dbReference>
<dbReference type="Bgee" id="FBgn0002948">
    <property type="expression patterns" value="Expressed in secondary oocyte and 41 other cell types or tissues"/>
</dbReference>
<dbReference type="ExpressionAtlas" id="P18105">
    <property type="expression patterns" value="baseline and differential"/>
</dbReference>
<dbReference type="GO" id="GO:0005737">
    <property type="term" value="C:cytoplasm"/>
    <property type="evidence" value="ECO:0000318"/>
    <property type="project" value="GO_Central"/>
</dbReference>
<dbReference type="GO" id="GO:0005871">
    <property type="term" value="C:kinesin complex"/>
    <property type="evidence" value="ECO:0000314"/>
    <property type="project" value="UniProtKB"/>
</dbReference>
<dbReference type="GO" id="GO:0005874">
    <property type="term" value="C:microtubule"/>
    <property type="evidence" value="ECO:0000318"/>
    <property type="project" value="GO_Central"/>
</dbReference>
<dbReference type="GO" id="GO:0005524">
    <property type="term" value="F:ATP binding"/>
    <property type="evidence" value="ECO:0007669"/>
    <property type="project" value="UniProtKB-KW"/>
</dbReference>
<dbReference type="GO" id="GO:0016887">
    <property type="term" value="F:ATP hydrolysis activity"/>
    <property type="evidence" value="ECO:0000318"/>
    <property type="project" value="GO_Central"/>
</dbReference>
<dbReference type="GO" id="GO:0008017">
    <property type="term" value="F:microtubule binding"/>
    <property type="evidence" value="ECO:0000318"/>
    <property type="project" value="GO_Central"/>
</dbReference>
<dbReference type="GO" id="GO:0003777">
    <property type="term" value="F:microtubule motor activity"/>
    <property type="evidence" value="ECO:0000315"/>
    <property type="project" value="UniProtKB"/>
</dbReference>
<dbReference type="GO" id="GO:0051010">
    <property type="term" value="F:microtubule plus-end binding"/>
    <property type="evidence" value="ECO:0000314"/>
    <property type="project" value="FlyBase"/>
</dbReference>
<dbReference type="GO" id="GO:0032837">
    <property type="term" value="P:distributive segregation"/>
    <property type="evidence" value="ECO:0000315"/>
    <property type="project" value="FlyBase"/>
</dbReference>
<dbReference type="GO" id="GO:0051296">
    <property type="term" value="P:establishment of meiotic spindle orientation"/>
    <property type="evidence" value="ECO:0000315"/>
    <property type="project" value="FlyBase"/>
</dbReference>
<dbReference type="GO" id="GO:0007143">
    <property type="term" value="P:female meiotic nuclear division"/>
    <property type="evidence" value="ECO:0000315"/>
    <property type="project" value="FlyBase"/>
</dbReference>
<dbReference type="GO" id="GO:0045132">
    <property type="term" value="P:meiotic chromosome segregation"/>
    <property type="evidence" value="ECO:0000315"/>
    <property type="project" value="UniProtKB"/>
</dbReference>
<dbReference type="GO" id="GO:0007018">
    <property type="term" value="P:microtubule-based movement"/>
    <property type="evidence" value="ECO:0000318"/>
    <property type="project" value="GO_Central"/>
</dbReference>
<dbReference type="GO" id="GO:0031116">
    <property type="term" value="P:positive regulation of microtubule polymerization"/>
    <property type="evidence" value="ECO:0000314"/>
    <property type="project" value="FlyBase"/>
</dbReference>
<dbReference type="GO" id="GO:0007057">
    <property type="term" value="P:spindle assembly involved in female meiosis I"/>
    <property type="evidence" value="ECO:0000315"/>
    <property type="project" value="FlyBase"/>
</dbReference>
<dbReference type="CDD" id="cd00106">
    <property type="entry name" value="KISc"/>
    <property type="match status" value="1"/>
</dbReference>
<dbReference type="Gene3D" id="1.10.150.280">
    <property type="entry name" value="AF1531-like domain"/>
    <property type="match status" value="1"/>
</dbReference>
<dbReference type="Gene3D" id="3.40.850.10">
    <property type="entry name" value="Kinesin motor domain"/>
    <property type="match status" value="1"/>
</dbReference>
<dbReference type="InterPro" id="IPR027640">
    <property type="entry name" value="Kinesin-like_fam"/>
</dbReference>
<dbReference type="InterPro" id="IPR019821">
    <property type="entry name" value="Kinesin_motor_CS"/>
</dbReference>
<dbReference type="InterPro" id="IPR001752">
    <property type="entry name" value="Kinesin_motor_dom"/>
</dbReference>
<dbReference type="InterPro" id="IPR036961">
    <property type="entry name" value="Kinesin_motor_dom_sf"/>
</dbReference>
<dbReference type="InterPro" id="IPR027417">
    <property type="entry name" value="P-loop_NTPase"/>
</dbReference>
<dbReference type="InterPro" id="IPR010994">
    <property type="entry name" value="RuvA_2-like"/>
</dbReference>
<dbReference type="PANTHER" id="PTHR47969">
    <property type="entry name" value="CHROMOSOME-ASSOCIATED KINESIN KIF4A-RELATED"/>
    <property type="match status" value="1"/>
</dbReference>
<dbReference type="PANTHER" id="PTHR47969:SF15">
    <property type="entry name" value="CHROMOSOME-ASSOCIATED KINESIN KIF4A-RELATED"/>
    <property type="match status" value="1"/>
</dbReference>
<dbReference type="Pfam" id="PF00225">
    <property type="entry name" value="Kinesin"/>
    <property type="match status" value="1"/>
</dbReference>
<dbReference type="PRINTS" id="PR00380">
    <property type="entry name" value="KINESINHEAVY"/>
</dbReference>
<dbReference type="SMART" id="SM00129">
    <property type="entry name" value="KISc"/>
    <property type="match status" value="1"/>
</dbReference>
<dbReference type="SUPFAM" id="SSF52540">
    <property type="entry name" value="P-loop containing nucleoside triphosphate hydrolases"/>
    <property type="match status" value="1"/>
</dbReference>
<dbReference type="SUPFAM" id="SSF47781">
    <property type="entry name" value="RuvA domain 2-like"/>
    <property type="match status" value="1"/>
</dbReference>
<dbReference type="PROSITE" id="PS00411">
    <property type="entry name" value="KINESIN_MOTOR_1"/>
    <property type="match status" value="1"/>
</dbReference>
<dbReference type="PROSITE" id="PS50067">
    <property type="entry name" value="KINESIN_MOTOR_2"/>
    <property type="match status" value="1"/>
</dbReference>
<comment type="function">
    <text>Required for the distributive chromosome segregation of non-exchange chromosomes during meiosis. May be a microtubule motor required to hold distributively 'paired' chromosomes at the metaphase plate until anaphase.</text>
</comment>
<comment type="subcellular location">
    <subcellularLocation>
        <location evidence="5">Cytoplasm</location>
        <location evidence="5">Cytoskeleton</location>
    </subcellularLocation>
</comment>
<comment type="tissue specificity">
    <text>In adult female, found in meiotically active ovaries.</text>
</comment>
<comment type="developmental stage">
    <text>Embryonic, larval, and pupal stages. Only expressed in female adults.</text>
</comment>
<comment type="miscellaneous">
    <text>The nod(DTW) mutation is a cold-sensitive recessive lethal mutation.</text>
</comment>
<comment type="similarity">
    <text evidence="2">Belongs to the TRAFAC class myosin-kinesin ATPase superfamily. Kinesin family.</text>
</comment>